<reference key="1">
    <citation type="submission" date="2007-10" db="EMBL/GenBank/DDBJ databases">
        <title>Identification and biological activity of ovine and caprine calcitonin receptor-Sti.</title>
        <authorList>
            <person name="Charles C.J."/>
            <person name="Katafuchi T."/>
            <person name="Yandle T.G."/>
            <person name="Minamino N."/>
        </authorList>
    </citation>
    <scope>NUCLEOTIDE SEQUENCE [MRNA]</scope>
</reference>
<organism>
    <name type="scientific">Ovis aries</name>
    <name type="common">Sheep</name>
    <dbReference type="NCBI Taxonomy" id="9940"/>
    <lineage>
        <taxon>Eukaryota</taxon>
        <taxon>Metazoa</taxon>
        <taxon>Chordata</taxon>
        <taxon>Craniata</taxon>
        <taxon>Vertebrata</taxon>
        <taxon>Euteleostomi</taxon>
        <taxon>Mammalia</taxon>
        <taxon>Eutheria</taxon>
        <taxon>Laurasiatheria</taxon>
        <taxon>Artiodactyla</taxon>
        <taxon>Ruminantia</taxon>
        <taxon>Pecora</taxon>
        <taxon>Bovidae</taxon>
        <taxon>Caprinae</taxon>
        <taxon>Ovis</taxon>
    </lineage>
</organism>
<dbReference type="EMBL" id="AB364648">
    <property type="protein sequence ID" value="BAG50397.1"/>
    <property type="molecule type" value="mRNA"/>
</dbReference>
<dbReference type="RefSeq" id="NP_001123627.1">
    <property type="nucleotide sequence ID" value="NM_001130155.1"/>
</dbReference>
<dbReference type="SMR" id="B3IWF9"/>
<dbReference type="STRING" id="9940.ENSOARP00000006772"/>
<dbReference type="Ensembl" id="ENSOART00180056989">
    <property type="protein sequence ID" value="ENSOARP00180030362"/>
    <property type="gene ID" value="ENSOARG00180033942"/>
</dbReference>
<dbReference type="Ensembl" id="ENSOART00215029518">
    <property type="protein sequence ID" value="ENSOARP00215015417"/>
    <property type="gene ID" value="ENSOARG00215017616"/>
</dbReference>
<dbReference type="Ensembl" id="ENSOART00220030716">
    <property type="protein sequence ID" value="ENSOARP00220016968"/>
    <property type="gene ID" value="ENSOARG00220018384"/>
</dbReference>
<dbReference type="Ensembl" id="ENSOART00225019875">
    <property type="protein sequence ID" value="ENSOARP00225009705"/>
    <property type="gene ID" value="ENSOARG00225012007"/>
</dbReference>
<dbReference type="Ensembl" id="ENSOART00260030624">
    <property type="protein sequence ID" value="ENSOARP00260015549"/>
    <property type="gene ID" value="ENSOARG00260018762"/>
</dbReference>
<dbReference type="GeneID" id="100170328"/>
<dbReference type="KEGG" id="oas:100170328"/>
<dbReference type="CTD" id="797"/>
<dbReference type="OrthoDB" id="9929923at2759"/>
<dbReference type="Proteomes" id="UP000002356">
    <property type="component" value="Unplaced"/>
</dbReference>
<dbReference type="GO" id="GO:0005615">
    <property type="term" value="C:extracellular space"/>
    <property type="evidence" value="ECO:0007669"/>
    <property type="project" value="TreeGrafter"/>
</dbReference>
<dbReference type="GO" id="GO:0031716">
    <property type="term" value="F:calcitonin receptor binding"/>
    <property type="evidence" value="ECO:0007669"/>
    <property type="project" value="TreeGrafter"/>
</dbReference>
<dbReference type="GO" id="GO:0005179">
    <property type="term" value="F:hormone activity"/>
    <property type="evidence" value="ECO:0007669"/>
    <property type="project" value="InterPro"/>
</dbReference>
<dbReference type="GO" id="GO:0007189">
    <property type="term" value="P:adenylate cyclase-activating G protein-coupled receptor signaling pathway"/>
    <property type="evidence" value="ECO:0007669"/>
    <property type="project" value="TreeGrafter"/>
</dbReference>
<dbReference type="GO" id="GO:0051480">
    <property type="term" value="P:regulation of cytosolic calcium ion concentration"/>
    <property type="evidence" value="ECO:0007669"/>
    <property type="project" value="TreeGrafter"/>
</dbReference>
<dbReference type="Gene3D" id="6.10.250.2190">
    <property type="match status" value="1"/>
</dbReference>
<dbReference type="InterPro" id="IPR021117">
    <property type="entry name" value="Calcitonin-like"/>
</dbReference>
<dbReference type="InterPro" id="IPR021116">
    <property type="entry name" value="Calcitonin/adrenomedullin"/>
</dbReference>
<dbReference type="InterPro" id="IPR018360">
    <property type="entry name" value="Calcitonin_CS"/>
</dbReference>
<dbReference type="InterPro" id="IPR015476">
    <property type="entry name" value="Calcitonin_gene-rel_peptide"/>
</dbReference>
<dbReference type="InterPro" id="IPR001693">
    <property type="entry name" value="Calcitonin_peptide-like"/>
</dbReference>
<dbReference type="PANTHER" id="PTHR10505:SF13">
    <property type="entry name" value="CALCITONIN GENE-RELATED PEPTIDE 1"/>
    <property type="match status" value="1"/>
</dbReference>
<dbReference type="PANTHER" id="PTHR10505">
    <property type="entry name" value="CALCITONIN-RELATED"/>
    <property type="match status" value="1"/>
</dbReference>
<dbReference type="Pfam" id="PF00214">
    <property type="entry name" value="Calc_CGRP_IAPP"/>
    <property type="match status" value="1"/>
</dbReference>
<dbReference type="PRINTS" id="PR00817">
    <property type="entry name" value="CALCITONINB"/>
</dbReference>
<dbReference type="SMART" id="SM00113">
    <property type="entry name" value="CALCITONIN"/>
    <property type="match status" value="1"/>
</dbReference>
<dbReference type="PROSITE" id="PS00258">
    <property type="entry name" value="CALCITONIN"/>
    <property type="match status" value="1"/>
</dbReference>
<evidence type="ECO:0000250" key="1"/>
<evidence type="ECO:0000255" key="2"/>
<evidence type="ECO:0000305" key="3"/>
<gene>
    <name type="primary">CRSP1</name>
</gene>
<sequence length="125" mass="14419">MGFWKFPPFLVLSILVLYQAGMFHAAPFRSVFDGRFDPATLDEEESRLLLAAMVNDYEQMRTRESEKAQKTEGSRIQKRACNTATCMTHRLAGWLSRSGSMVRSNLLPTKMGFKIFSGPRRNFWF</sequence>
<protein>
    <recommendedName>
        <fullName>Calcitonin receptor-stimulating peptide 1</fullName>
        <shortName>CRSP-1</shortName>
    </recommendedName>
</protein>
<comment type="function">
    <text evidence="1">Stimulates cAMP production via the calcitonin receptor (CT) but not via the CT-like (CL) receptor.</text>
</comment>
<comment type="subcellular location">
    <subcellularLocation>
        <location evidence="1">Secreted</location>
    </subcellularLocation>
</comment>
<comment type="similarity">
    <text evidence="3">Belongs to the calcitonin family.</text>
</comment>
<proteinExistence type="evidence at transcript level"/>
<accession>B3IWF9</accession>
<feature type="signal peptide" evidence="2">
    <location>
        <begin position="1"/>
        <end position="25"/>
    </location>
</feature>
<feature type="propeptide" id="PRO_0000353079" evidence="1">
    <location>
        <begin position="26"/>
        <end position="77"/>
    </location>
</feature>
<feature type="peptide" id="PRO_0000353080" description="Calcitonin receptor-stimulating peptide 1">
    <location>
        <begin position="80"/>
        <end position="125"/>
    </location>
</feature>
<feature type="disulfide bond" evidence="1">
    <location>
        <begin position="81"/>
        <end position="86"/>
    </location>
</feature>
<name>CRSP1_SHEEP</name>
<keyword id="KW-0165">Cleavage on pair of basic residues</keyword>
<keyword id="KW-1015">Disulfide bond</keyword>
<keyword id="KW-0675">Receptor</keyword>
<keyword id="KW-1185">Reference proteome</keyword>
<keyword id="KW-0964">Secreted</keyword>
<keyword id="KW-0732">Signal</keyword>